<sequence>MSDKKDQVPGAVEAPRGVSRRSFLGTGAVTGAVLAGATALGAGTFTRESWAAAAKEAKSKIHVGPGELDEYYGFWSGGHQGEVRVLGVPSMRELMRIPVFNVDSATGWGLTNESKRILGDSAKYQNGDCHHPHISMTDGKYDGKYLFINDKANSRVARIRLDIMKCDKILTVPNVQAIHGLRLQKVPYTKYVFANAEFVIPHPNDGHTFDLQDKNSFTMFNAIDAEKMEMAFQVIVDGNLDNSDADYTGKYAASTCYNSEKAYDLGGMMRNERDWVVVFNILRIEAAIKAGKFITLDGSKVPVVDGRKTDGKDSEFTRYIPVPKNPHGLNTSSDGKYFIANGKLSPTVSMIAIDRLDDLFNDRYKDPREVIVAEPELGLGPLHTTFDGRGNAYTTLFIDSQVVKWNMDEAIRAYKGEKVNYIKQKLDVQYQPGHNHASLTETSEADGKWLVVLCKFSKDRFLPTGPLHPENDQLIDISGEEMKLVHDGPAFAEPHDCILARRDQIKTQKIWNRNDPFFADTVALAKKDGINLETDNKVIRDGNKVRVYMTSMAPAYGLTEFTVKQGNEVTVTITNIDQIEDVSHGFVMTNHGASMEISPQQTSSITFTADKAGLHWYYCSWFCHALHMEMVGRMLVEKA</sequence>
<protein>
    <recommendedName>
        <fullName>Nitrous-oxide reductase</fullName>
        <ecNumber>1.7.2.4</ecNumber>
    </recommendedName>
    <alternativeName>
        <fullName>N(2)OR</fullName>
    </alternativeName>
    <alternativeName>
        <fullName>N2O reductase</fullName>
    </alternativeName>
</protein>
<accession>Q9F0W4</accession>
<accession>Q9X2U9</accession>
<name>NOSZ_PSEFL</name>
<gene>
    <name type="primary">nosZ</name>
</gene>
<feature type="signal peptide" description="Tat-type signal" evidence="2">
    <location>
        <begin position="1"/>
        <end position="54"/>
    </location>
</feature>
<feature type="chain" id="PRO_0000019830" description="Nitrous-oxide reductase">
    <location>
        <begin position="55"/>
        <end position="639"/>
    </location>
</feature>
<feature type="region of interest" description="COX2-like">
    <location>
        <begin position="543"/>
        <end position="639"/>
    </location>
</feature>
<feature type="binding site" evidence="1">
    <location>
        <position position="130"/>
    </location>
    <ligand>
        <name>Cu cation</name>
        <dbReference type="ChEBI" id="CHEBI:23378"/>
        <label>Z2</label>
    </ligand>
</feature>
<feature type="binding site" evidence="1">
    <location>
        <position position="131"/>
    </location>
    <ligand>
        <name>Cu cation</name>
        <dbReference type="ChEBI" id="CHEBI:23378"/>
        <label>Z3</label>
    </ligand>
</feature>
<feature type="binding site" evidence="1">
    <location>
        <position position="179"/>
    </location>
    <ligand>
        <name>Cu cation</name>
        <dbReference type="ChEBI" id="CHEBI:23378"/>
        <label>Z2</label>
    </ligand>
</feature>
<feature type="binding site" evidence="1">
    <location>
        <position position="257"/>
    </location>
    <ligand>
        <name>Ca(2+)</name>
        <dbReference type="ChEBI" id="CHEBI:29108"/>
        <label>2</label>
    </ligand>
</feature>
<feature type="binding site" evidence="1">
    <location>
        <position position="260"/>
    </location>
    <ligand>
        <name>Ca(2+)</name>
        <dbReference type="ChEBI" id="CHEBI:29108"/>
        <label>2</label>
    </ligand>
</feature>
<feature type="binding site" evidence="1">
    <location>
        <position position="268"/>
    </location>
    <ligand>
        <name>Ca(2+)</name>
        <dbReference type="ChEBI" id="CHEBI:29108"/>
        <label>2</label>
    </ligand>
</feature>
<feature type="binding site" evidence="1">
    <location>
        <position position="274"/>
    </location>
    <ligand>
        <name>Ca(2+)</name>
        <dbReference type="ChEBI" id="CHEBI:29108"/>
        <label>2</label>
    </ligand>
</feature>
<feature type="binding site" evidence="1">
    <location>
        <position position="325"/>
    </location>
    <ligand>
        <name>Ca(2+)</name>
        <dbReference type="ChEBI" id="CHEBI:29108"/>
        <label>2</label>
    </ligand>
</feature>
<feature type="binding site" evidence="1">
    <location>
        <position position="327"/>
    </location>
    <ligand>
        <name>Cu cation</name>
        <dbReference type="ChEBI" id="CHEBI:23378"/>
        <label>Z1</label>
    </ligand>
</feature>
<feature type="binding site" evidence="1">
    <location>
        <position position="383"/>
    </location>
    <ligand>
        <name>Cu cation</name>
        <dbReference type="ChEBI" id="CHEBI:23378"/>
        <label>Z1</label>
    </ligand>
</feature>
<feature type="binding site" evidence="1">
    <location>
        <position position="434"/>
    </location>
    <ligand>
        <name>Cu cation</name>
        <dbReference type="ChEBI" id="CHEBI:23378"/>
        <label>Z3</label>
    </ligand>
</feature>
<feature type="binding site" evidence="1">
    <location>
        <position position="455"/>
    </location>
    <ligand>
        <name>Ca(2+)</name>
        <dbReference type="ChEBI" id="CHEBI:29108"/>
        <label>1</label>
    </ligand>
</feature>
<feature type="binding site" evidence="1">
    <location>
        <position position="470"/>
    </location>
    <ligand>
        <name>Ca(2+)</name>
        <dbReference type="ChEBI" id="CHEBI:29108"/>
        <label>1</label>
    </ligand>
</feature>
<feature type="binding site" evidence="1">
    <location>
        <position position="495"/>
    </location>
    <ligand>
        <name>Cu cation</name>
        <dbReference type="ChEBI" id="CHEBI:23378"/>
        <label>Z4</label>
    </ligand>
</feature>
<feature type="binding site" evidence="1">
    <location>
        <position position="584"/>
    </location>
    <ligand>
        <name>Cu cation</name>
        <dbReference type="ChEBI" id="CHEBI:23378"/>
        <label>A1</label>
    </ligand>
</feature>
<feature type="binding site" evidence="1">
    <location>
        <position position="619"/>
    </location>
    <ligand>
        <name>Cu cation</name>
        <dbReference type="ChEBI" id="CHEBI:23378"/>
        <label>A1</label>
    </ligand>
</feature>
<feature type="binding site" evidence="1">
    <location>
        <position position="619"/>
    </location>
    <ligand>
        <name>Cu cation</name>
        <dbReference type="ChEBI" id="CHEBI:23378"/>
        <label>A2</label>
    </ligand>
</feature>
<feature type="binding site" evidence="1">
    <location>
        <position position="621"/>
    </location>
    <ligand>
        <name>Cu cation</name>
        <dbReference type="ChEBI" id="CHEBI:23378"/>
        <label>A2</label>
    </ligand>
</feature>
<feature type="binding site" evidence="1">
    <location>
        <position position="623"/>
    </location>
    <ligand>
        <name>Cu cation</name>
        <dbReference type="ChEBI" id="CHEBI:23378"/>
        <label>A1</label>
    </ligand>
</feature>
<feature type="binding site" evidence="1">
    <location>
        <position position="623"/>
    </location>
    <ligand>
        <name>Cu cation</name>
        <dbReference type="ChEBI" id="CHEBI:23378"/>
        <label>A2</label>
    </ligand>
</feature>
<feature type="binding site" evidence="1">
    <location>
        <position position="627"/>
    </location>
    <ligand>
        <name>Cu cation</name>
        <dbReference type="ChEBI" id="CHEBI:23378"/>
        <label>A2</label>
    </ligand>
</feature>
<feature type="binding site" evidence="1">
    <location>
        <position position="630"/>
    </location>
    <ligand>
        <name>Cu cation</name>
        <dbReference type="ChEBI" id="CHEBI:23378"/>
        <label>A1</label>
    </ligand>
</feature>
<reference key="1">
    <citation type="journal article" date="2001" name="Biochim. Biophys. Acta">
        <title>Characterization and transcriptional analysis of Pseudomonas fluorescens denitrifying clusters containing the nar, nir, nor and nos genes.</title>
        <authorList>
            <person name="Philippot L."/>
            <person name="Mirleau P."/>
            <person name="Mazurier S."/>
            <person name="Siblot S."/>
            <person name="Hartmann A."/>
            <person name="Lemanceau P."/>
            <person name="Germon J.C."/>
        </authorList>
    </citation>
    <scope>NUCLEOTIDE SEQUENCE [GENOMIC DNA]</scope>
    <source>
        <strain>C7R12</strain>
    </source>
</reference>
<reference key="2">
    <citation type="submission" date="1998-03" db="EMBL/GenBank/DDBJ databases">
        <authorList>
            <person name="Philippot L."/>
            <person name="Cheneby D."/>
            <person name="Hartmann A."/>
            <person name="Germon J.C."/>
        </authorList>
    </citation>
    <scope>NUCLEOTIDE SEQUENCE [GENOMIC DNA] OF 1-613</scope>
    <source>
        <strain>C7R12</strain>
    </source>
</reference>
<proteinExistence type="inferred from homology"/>
<evidence type="ECO:0000250" key="1"/>
<evidence type="ECO:0000255" key="2"/>
<evidence type="ECO:0000305" key="3"/>
<comment type="function">
    <text evidence="1">Nitrous-oxide reductase is part of a bacterial respiratory system which is activated under anaerobic conditions in the presence of nitrate or nitrous oxide.</text>
</comment>
<comment type="catalytic activity">
    <reaction>
        <text>N2 + 2 Fe(III)-[cytochrome c] + H2O = nitrous oxide + 2 Fe(II)-[cytochrome c] + 2 H(+)</text>
        <dbReference type="Rhea" id="RHEA:43108"/>
        <dbReference type="Rhea" id="RHEA-COMP:10350"/>
        <dbReference type="Rhea" id="RHEA-COMP:14399"/>
        <dbReference type="ChEBI" id="CHEBI:15377"/>
        <dbReference type="ChEBI" id="CHEBI:15378"/>
        <dbReference type="ChEBI" id="CHEBI:17045"/>
        <dbReference type="ChEBI" id="CHEBI:17997"/>
        <dbReference type="ChEBI" id="CHEBI:29033"/>
        <dbReference type="ChEBI" id="CHEBI:29034"/>
        <dbReference type="EC" id="1.7.2.4"/>
    </reaction>
</comment>
<comment type="cofactor">
    <cofactor evidence="1">
        <name>Ca(2+)</name>
        <dbReference type="ChEBI" id="CHEBI:29108"/>
    </cofactor>
    <text evidence="1">Binds 2 calcium ions per subunit.</text>
</comment>
<comment type="cofactor">
    <cofactor evidence="1">
        <name>Cu cation</name>
        <dbReference type="ChEBI" id="CHEBI:23378"/>
    </cofactor>
    <text evidence="1">Binds 6 Cu cations per subunit. Each subunit contains 2 copper centers; Cu(A) (binuclear) and Cu(Z) (tetranuclear). Cu(Z) is thought to be the site of nitrous oxide reduction.</text>
</comment>
<comment type="pathway">
    <text>Nitrogen metabolism; nitrate reduction (denitrification); dinitrogen from nitrate: step 4/4.</text>
</comment>
<comment type="subunit">
    <text evidence="1">Homodimer.</text>
</comment>
<comment type="subcellular location">
    <subcellularLocation>
        <location evidence="1">Periplasm</location>
    </subcellularLocation>
</comment>
<comment type="PTM">
    <text>Predicted to be exported by the Tat system. The position of the signal peptide cleavage has not been experimentally proven.</text>
</comment>
<comment type="similarity">
    <text evidence="3">Belongs to the NosZ family.</text>
</comment>
<comment type="similarity">
    <text evidence="3">In the C-terminal section; belongs to the cytochrome c oxidase subunit 2 family.</text>
</comment>
<organism>
    <name type="scientific">Pseudomonas fluorescens</name>
    <dbReference type="NCBI Taxonomy" id="294"/>
    <lineage>
        <taxon>Bacteria</taxon>
        <taxon>Pseudomonadati</taxon>
        <taxon>Pseudomonadota</taxon>
        <taxon>Gammaproteobacteria</taxon>
        <taxon>Pseudomonadales</taxon>
        <taxon>Pseudomonadaceae</taxon>
        <taxon>Pseudomonas</taxon>
    </lineage>
</organism>
<keyword id="KW-0106">Calcium</keyword>
<keyword id="KW-0186">Copper</keyword>
<keyword id="KW-0479">Metal-binding</keyword>
<keyword id="KW-0560">Oxidoreductase</keyword>
<keyword id="KW-0574">Periplasm</keyword>
<keyword id="KW-0732">Signal</keyword>
<dbReference type="EC" id="1.7.2.4"/>
<dbReference type="EMBL" id="AF197468">
    <property type="protein sequence ID" value="AAG34386.1"/>
    <property type="molecule type" value="Genomic_DNA"/>
</dbReference>
<dbReference type="EMBL" id="AF056319">
    <property type="protein sequence ID" value="AAD22389.1"/>
    <property type="molecule type" value="Genomic_DNA"/>
</dbReference>
<dbReference type="SMR" id="Q9F0W4"/>
<dbReference type="BRENDA" id="1.7.2.4">
    <property type="organism ID" value="5121"/>
</dbReference>
<dbReference type="UniPathway" id="UPA00652">
    <property type="reaction ID" value="UER00709"/>
</dbReference>
<dbReference type="GO" id="GO:0016020">
    <property type="term" value="C:membrane"/>
    <property type="evidence" value="ECO:0007669"/>
    <property type="project" value="InterPro"/>
</dbReference>
<dbReference type="GO" id="GO:0042597">
    <property type="term" value="C:periplasmic space"/>
    <property type="evidence" value="ECO:0007669"/>
    <property type="project" value="UniProtKB-SubCell"/>
</dbReference>
<dbReference type="GO" id="GO:0005509">
    <property type="term" value="F:calcium ion binding"/>
    <property type="evidence" value="ECO:0007669"/>
    <property type="project" value="UniProtKB-UniRule"/>
</dbReference>
<dbReference type="GO" id="GO:0005507">
    <property type="term" value="F:copper ion binding"/>
    <property type="evidence" value="ECO:0007669"/>
    <property type="project" value="UniProtKB-UniRule"/>
</dbReference>
<dbReference type="GO" id="GO:0004129">
    <property type="term" value="F:cytochrome-c oxidase activity"/>
    <property type="evidence" value="ECO:0007669"/>
    <property type="project" value="InterPro"/>
</dbReference>
<dbReference type="GO" id="GO:0050304">
    <property type="term" value="F:nitrous-oxide reductase activity"/>
    <property type="evidence" value="ECO:0007669"/>
    <property type="project" value="UniProtKB-UniRule"/>
</dbReference>
<dbReference type="GO" id="GO:0019333">
    <property type="term" value="P:denitrification pathway"/>
    <property type="evidence" value="ECO:0007669"/>
    <property type="project" value="UniProtKB-UniPathway"/>
</dbReference>
<dbReference type="CDD" id="cd04223">
    <property type="entry name" value="N2OR_C"/>
    <property type="match status" value="1"/>
</dbReference>
<dbReference type="FunFam" id="2.130.10.10:FF:001102">
    <property type="entry name" value="Nitrous-oxide reductase"/>
    <property type="match status" value="1"/>
</dbReference>
<dbReference type="FunFam" id="2.60.40.420:FF:000095">
    <property type="entry name" value="Nitrous-oxide reductase"/>
    <property type="match status" value="1"/>
</dbReference>
<dbReference type="Gene3D" id="2.60.40.420">
    <property type="entry name" value="Cupredoxins - blue copper proteins"/>
    <property type="match status" value="1"/>
</dbReference>
<dbReference type="Gene3D" id="2.130.10.10">
    <property type="entry name" value="YVTN repeat-like/Quinoprotein amine dehydrogenase"/>
    <property type="match status" value="1"/>
</dbReference>
<dbReference type="HAMAP" id="MF_00716">
    <property type="entry name" value="NosZ"/>
    <property type="match status" value="1"/>
</dbReference>
<dbReference type="InterPro" id="IPR002429">
    <property type="entry name" value="CcO_II-like_C"/>
</dbReference>
<dbReference type="InterPro" id="IPR001505">
    <property type="entry name" value="Copper_CuA"/>
</dbReference>
<dbReference type="InterPro" id="IPR008972">
    <property type="entry name" value="Cupredoxin"/>
</dbReference>
<dbReference type="InterPro" id="IPR011045">
    <property type="entry name" value="N2O_reductase_N"/>
</dbReference>
<dbReference type="InterPro" id="IPR034205">
    <property type="entry name" value="N2OR_C"/>
</dbReference>
<dbReference type="InterPro" id="IPR023644">
    <property type="entry name" value="NO_Rdtase"/>
</dbReference>
<dbReference type="InterPro" id="IPR041114">
    <property type="entry name" value="Nos_propeller"/>
</dbReference>
<dbReference type="InterPro" id="IPR041142">
    <property type="entry name" value="NOS_propeller_2"/>
</dbReference>
<dbReference type="InterPro" id="IPR051403">
    <property type="entry name" value="NosZ/Cyto_c_oxidase_sub2"/>
</dbReference>
<dbReference type="InterPro" id="IPR006311">
    <property type="entry name" value="TAT_signal"/>
</dbReference>
<dbReference type="InterPro" id="IPR015943">
    <property type="entry name" value="WD40/YVTN_repeat-like_dom_sf"/>
</dbReference>
<dbReference type="NCBIfam" id="TIGR04244">
    <property type="entry name" value="nitrous_NosZ_RR"/>
    <property type="match status" value="1"/>
</dbReference>
<dbReference type="PANTHER" id="PTHR42838">
    <property type="entry name" value="CYTOCHROME C OXIDASE SUBUNIT II"/>
    <property type="match status" value="1"/>
</dbReference>
<dbReference type="PANTHER" id="PTHR42838:SF2">
    <property type="entry name" value="NITROUS-OXIDE REDUCTASE"/>
    <property type="match status" value="1"/>
</dbReference>
<dbReference type="Pfam" id="PF18764">
    <property type="entry name" value="nos_propeller"/>
    <property type="match status" value="1"/>
</dbReference>
<dbReference type="Pfam" id="PF18793">
    <property type="entry name" value="nos_propeller_2"/>
    <property type="match status" value="1"/>
</dbReference>
<dbReference type="SUPFAM" id="SSF49503">
    <property type="entry name" value="Cupredoxins"/>
    <property type="match status" value="1"/>
</dbReference>
<dbReference type="SUPFAM" id="SSF50974">
    <property type="entry name" value="Nitrous oxide reductase, N-terminal domain"/>
    <property type="match status" value="1"/>
</dbReference>
<dbReference type="PROSITE" id="PS00078">
    <property type="entry name" value="COX2"/>
    <property type="match status" value="1"/>
</dbReference>
<dbReference type="PROSITE" id="PS50857">
    <property type="entry name" value="COX2_CUA"/>
    <property type="match status" value="1"/>
</dbReference>
<dbReference type="PROSITE" id="PS51318">
    <property type="entry name" value="TAT"/>
    <property type="match status" value="1"/>
</dbReference>